<name>RS7_PARS2</name>
<proteinExistence type="inferred from homology"/>
<organism>
    <name type="scientific">Parafrankia sp. (strain EAN1pec)</name>
    <dbReference type="NCBI Taxonomy" id="298653"/>
    <lineage>
        <taxon>Bacteria</taxon>
        <taxon>Bacillati</taxon>
        <taxon>Actinomycetota</taxon>
        <taxon>Actinomycetes</taxon>
        <taxon>Frankiales</taxon>
        <taxon>Frankiaceae</taxon>
        <taxon>Parafrankia</taxon>
    </lineage>
</organism>
<evidence type="ECO:0000255" key="1">
    <source>
        <dbReference type="HAMAP-Rule" id="MF_00480"/>
    </source>
</evidence>
<evidence type="ECO:0000305" key="2"/>
<protein>
    <recommendedName>
        <fullName evidence="1">Small ribosomal subunit protein uS7</fullName>
    </recommendedName>
    <alternativeName>
        <fullName evidence="2">30S ribosomal protein S7</fullName>
    </alternativeName>
</protein>
<gene>
    <name evidence="1" type="primary">rpsG</name>
    <name type="ordered locus">Franean1_6053</name>
</gene>
<keyword id="KW-0687">Ribonucleoprotein</keyword>
<keyword id="KW-0689">Ribosomal protein</keyword>
<keyword id="KW-0694">RNA-binding</keyword>
<keyword id="KW-0699">rRNA-binding</keyword>
<keyword id="KW-0820">tRNA-binding</keyword>
<accession>A8LC60</accession>
<dbReference type="EMBL" id="CP000820">
    <property type="protein sequence ID" value="ABW15397.1"/>
    <property type="molecule type" value="Genomic_DNA"/>
</dbReference>
<dbReference type="RefSeq" id="WP_020463481.1">
    <property type="nucleotide sequence ID" value="NC_009921.1"/>
</dbReference>
<dbReference type="SMR" id="A8LC60"/>
<dbReference type="STRING" id="298653.Franean1_6053"/>
<dbReference type="KEGG" id="fre:Franean1_6053"/>
<dbReference type="eggNOG" id="COG0049">
    <property type="taxonomic scope" value="Bacteria"/>
</dbReference>
<dbReference type="HOGENOM" id="CLU_072226_1_1_11"/>
<dbReference type="GO" id="GO:0015935">
    <property type="term" value="C:small ribosomal subunit"/>
    <property type="evidence" value="ECO:0007669"/>
    <property type="project" value="InterPro"/>
</dbReference>
<dbReference type="GO" id="GO:0019843">
    <property type="term" value="F:rRNA binding"/>
    <property type="evidence" value="ECO:0007669"/>
    <property type="project" value="UniProtKB-UniRule"/>
</dbReference>
<dbReference type="GO" id="GO:0003735">
    <property type="term" value="F:structural constituent of ribosome"/>
    <property type="evidence" value="ECO:0007669"/>
    <property type="project" value="InterPro"/>
</dbReference>
<dbReference type="GO" id="GO:0000049">
    <property type="term" value="F:tRNA binding"/>
    <property type="evidence" value="ECO:0007669"/>
    <property type="project" value="UniProtKB-UniRule"/>
</dbReference>
<dbReference type="GO" id="GO:0006412">
    <property type="term" value="P:translation"/>
    <property type="evidence" value="ECO:0007669"/>
    <property type="project" value="UniProtKB-UniRule"/>
</dbReference>
<dbReference type="CDD" id="cd14869">
    <property type="entry name" value="uS7_Bacteria"/>
    <property type="match status" value="1"/>
</dbReference>
<dbReference type="FunFam" id="1.10.455.10:FF:000001">
    <property type="entry name" value="30S ribosomal protein S7"/>
    <property type="match status" value="1"/>
</dbReference>
<dbReference type="Gene3D" id="1.10.455.10">
    <property type="entry name" value="Ribosomal protein S7 domain"/>
    <property type="match status" value="1"/>
</dbReference>
<dbReference type="HAMAP" id="MF_00480_B">
    <property type="entry name" value="Ribosomal_uS7_B"/>
    <property type="match status" value="1"/>
</dbReference>
<dbReference type="InterPro" id="IPR000235">
    <property type="entry name" value="Ribosomal_uS7"/>
</dbReference>
<dbReference type="InterPro" id="IPR005717">
    <property type="entry name" value="Ribosomal_uS7_bac/org-type"/>
</dbReference>
<dbReference type="InterPro" id="IPR020606">
    <property type="entry name" value="Ribosomal_uS7_CS"/>
</dbReference>
<dbReference type="InterPro" id="IPR023798">
    <property type="entry name" value="Ribosomal_uS7_dom"/>
</dbReference>
<dbReference type="InterPro" id="IPR036823">
    <property type="entry name" value="Ribosomal_uS7_dom_sf"/>
</dbReference>
<dbReference type="NCBIfam" id="TIGR01029">
    <property type="entry name" value="rpsG_bact"/>
    <property type="match status" value="1"/>
</dbReference>
<dbReference type="PANTHER" id="PTHR11205">
    <property type="entry name" value="RIBOSOMAL PROTEIN S7"/>
    <property type="match status" value="1"/>
</dbReference>
<dbReference type="Pfam" id="PF00177">
    <property type="entry name" value="Ribosomal_S7"/>
    <property type="match status" value="1"/>
</dbReference>
<dbReference type="PIRSF" id="PIRSF002122">
    <property type="entry name" value="RPS7p_RPS7a_RPS5e_RPS7o"/>
    <property type="match status" value="1"/>
</dbReference>
<dbReference type="SUPFAM" id="SSF47973">
    <property type="entry name" value="Ribosomal protein S7"/>
    <property type="match status" value="1"/>
</dbReference>
<dbReference type="PROSITE" id="PS00052">
    <property type="entry name" value="RIBOSOMAL_S7"/>
    <property type="match status" value="1"/>
</dbReference>
<comment type="function">
    <text evidence="1">One of the primary rRNA binding proteins, it binds directly to 16S rRNA where it nucleates assembly of the head domain of the 30S subunit. Is located at the subunit interface close to the decoding center, probably blocks exit of the E-site tRNA.</text>
</comment>
<comment type="subunit">
    <text evidence="1">Part of the 30S ribosomal subunit. Contacts proteins S9 and S11.</text>
</comment>
<comment type="similarity">
    <text evidence="1">Belongs to the universal ribosomal protein uS7 family.</text>
</comment>
<reference key="1">
    <citation type="journal article" date="2007" name="Genome Res.">
        <title>Genome characteristics of facultatively symbiotic Frankia sp. strains reflect host range and host plant biogeography.</title>
        <authorList>
            <person name="Normand P."/>
            <person name="Lapierre P."/>
            <person name="Tisa L.S."/>
            <person name="Gogarten J.P."/>
            <person name="Alloisio N."/>
            <person name="Bagnarol E."/>
            <person name="Bassi C.A."/>
            <person name="Berry A.M."/>
            <person name="Bickhart D.M."/>
            <person name="Choisne N."/>
            <person name="Couloux A."/>
            <person name="Cournoyer B."/>
            <person name="Cruveiller S."/>
            <person name="Daubin V."/>
            <person name="Demange N."/>
            <person name="Francino M.P."/>
            <person name="Goltsman E."/>
            <person name="Huang Y."/>
            <person name="Kopp O.R."/>
            <person name="Labarre L."/>
            <person name="Lapidus A."/>
            <person name="Lavire C."/>
            <person name="Marechal J."/>
            <person name="Martinez M."/>
            <person name="Mastronunzio J.E."/>
            <person name="Mullin B.C."/>
            <person name="Niemann J."/>
            <person name="Pujic P."/>
            <person name="Rawnsley T."/>
            <person name="Rouy Z."/>
            <person name="Schenowitz C."/>
            <person name="Sellstedt A."/>
            <person name="Tavares F."/>
            <person name="Tomkins J.P."/>
            <person name="Vallenet D."/>
            <person name="Valverde C."/>
            <person name="Wall L.G."/>
            <person name="Wang Y."/>
            <person name="Medigue C."/>
            <person name="Benson D.R."/>
        </authorList>
    </citation>
    <scope>NUCLEOTIDE SEQUENCE [LARGE SCALE GENOMIC DNA]</scope>
    <source>
        <strain>EAN1pec</strain>
    </source>
</reference>
<sequence length="156" mass="17219">MPRKGPAPKHPVVVDPVYGSPLVTALVNKVLLSGKKSVAERIVYGALEGAKNKTGNDPVVTLKRALDNVKPTLEVRSRRVGGATYQVPVEVRAGRSTTLALRWIVGYSRGRREKTMTERLMNELIDASNGLGASVKRREDTHKMAESNKAFAHYRW</sequence>
<feature type="chain" id="PRO_1000125949" description="Small ribosomal subunit protein uS7">
    <location>
        <begin position="1"/>
        <end position="156"/>
    </location>
</feature>